<dbReference type="EC" id="1.3.1.100" evidence="4"/>
<dbReference type="EMBL" id="HG792017">
    <property type="protein sequence ID" value="CDM33403.1"/>
    <property type="molecule type" value="Genomic_DNA"/>
</dbReference>
<dbReference type="SMR" id="W6Q9S9"/>
<dbReference type="STRING" id="1365484.W6Q9S9"/>
<dbReference type="OMA" id="MMATYYK"/>
<dbReference type="OrthoDB" id="276546at2759"/>
<dbReference type="UniPathway" id="UPA00327"/>
<dbReference type="Proteomes" id="UP000030686">
    <property type="component" value="Unassembled WGS sequence"/>
</dbReference>
<dbReference type="GO" id="GO:0010181">
    <property type="term" value="F:FMN binding"/>
    <property type="evidence" value="ECO:0007669"/>
    <property type="project" value="InterPro"/>
</dbReference>
<dbReference type="GO" id="GO:0003959">
    <property type="term" value="F:NADPH dehydrogenase activity"/>
    <property type="evidence" value="ECO:0007669"/>
    <property type="project" value="TreeGrafter"/>
</dbReference>
<dbReference type="GO" id="GO:0035835">
    <property type="term" value="P:indole alkaloid biosynthetic process"/>
    <property type="evidence" value="ECO:0007669"/>
    <property type="project" value="UniProtKB-UniPathway"/>
</dbReference>
<dbReference type="CDD" id="cd02933">
    <property type="entry name" value="OYE_like_FMN"/>
    <property type="match status" value="1"/>
</dbReference>
<dbReference type="FunFam" id="3.20.20.70:FF:000138">
    <property type="entry name" value="NADPH dehydrogenase 1"/>
    <property type="match status" value="1"/>
</dbReference>
<dbReference type="Gene3D" id="3.20.20.70">
    <property type="entry name" value="Aldolase class I"/>
    <property type="match status" value="1"/>
</dbReference>
<dbReference type="InterPro" id="IPR013785">
    <property type="entry name" value="Aldolase_TIM"/>
</dbReference>
<dbReference type="InterPro" id="IPR001155">
    <property type="entry name" value="OxRdtase_FMN_N"/>
</dbReference>
<dbReference type="InterPro" id="IPR045247">
    <property type="entry name" value="Oye-like"/>
</dbReference>
<dbReference type="PANTHER" id="PTHR22893">
    <property type="entry name" value="NADH OXIDOREDUCTASE-RELATED"/>
    <property type="match status" value="1"/>
</dbReference>
<dbReference type="PANTHER" id="PTHR22893:SF91">
    <property type="entry name" value="NADPH DEHYDROGENASE 2-RELATED"/>
    <property type="match status" value="1"/>
</dbReference>
<dbReference type="Pfam" id="PF00724">
    <property type="entry name" value="Oxidored_FMN"/>
    <property type="match status" value="1"/>
</dbReference>
<dbReference type="SUPFAM" id="SSF51395">
    <property type="entry name" value="FMN-linked oxidoreductases"/>
    <property type="match status" value="1"/>
</dbReference>
<name>FGOX3_PENRF</name>
<sequence length="369" mass="40053">MTKLFTPLHVGRMELANRIAMAPMTRYRASDNHVPLPIMKDYYAQRASVPGTLLITEATTISARAGGYANAPGIYNDAQIAAWKEVTDAVHAKGSYIYVQLWAVGRPANPQLLQAEGGYDLVSSSATAVSADAPTPRALSETEIYAWIADYAQAARNAVAAGFDGVEIHAANGYLIDQFTQDICNTRTDAWGGSVQGRARFALEVSRAVVEAVGADRTGIRFSPWSTFQGMRMKDPKPQFEYLAVQTAKLGLAYVHLVESRIAGGADVDATDRLDFFLRAYGKASPVIFAGGYDAESAVRAVDVEYADYDAIVGIGRPFISNPDLPFRVQNGIPFVPYDRATFYVPKDPKGYTDYAFSAEFQKAIEAAA</sequence>
<gene>
    <name evidence="5" type="primary">fgaOx3</name>
    <name type="ORF">PROQFM164_S03g000127</name>
</gene>
<organism>
    <name type="scientific">Penicillium roqueforti (strain FM164)</name>
    <dbReference type="NCBI Taxonomy" id="1365484"/>
    <lineage>
        <taxon>Eukaryota</taxon>
        <taxon>Fungi</taxon>
        <taxon>Dikarya</taxon>
        <taxon>Ascomycota</taxon>
        <taxon>Pezizomycotina</taxon>
        <taxon>Eurotiomycetes</taxon>
        <taxon>Eurotiomycetidae</taxon>
        <taxon>Eurotiales</taxon>
        <taxon>Aspergillaceae</taxon>
        <taxon>Penicillium</taxon>
    </lineage>
</organism>
<reference key="1">
    <citation type="journal article" date="2014" name="Nat. Commun.">
        <title>Multiple recent horizontal transfers of a large genomic region in cheese making fungi.</title>
        <authorList>
            <person name="Cheeseman K."/>
            <person name="Ropars J."/>
            <person name="Renault P."/>
            <person name="Dupont J."/>
            <person name="Gouzy J."/>
            <person name="Branca A."/>
            <person name="Abraham A.-L."/>
            <person name="Ceppi M."/>
            <person name="Conseiller E."/>
            <person name="Debuchy R."/>
            <person name="Malagnac F."/>
            <person name="Goarin A."/>
            <person name="Silar P."/>
            <person name="Lacoste S."/>
            <person name="Sallet E."/>
            <person name="Bensimon A."/>
            <person name="Giraud T."/>
            <person name="Brygoo Y."/>
        </authorList>
    </citation>
    <scope>NUCLEOTIDE SEQUENCE [LARGE SCALE GENOMIC DNA]</scope>
    <source>
        <strain>FM164</strain>
    </source>
</reference>
<reference key="2">
    <citation type="journal article" date="2017" name="Appl. Microbiol. Biotechnol.">
        <title>Silencing of a second dimethylallyltryptophan synthase of Penicillium roqueforti reveals a novel clavine alkaloid gene cluster.</title>
        <authorList>
            <person name="Fernandez-Bodega A."/>
            <person name="Alvarez-Alvarez R."/>
            <person name="Liras P."/>
            <person name="Martin J.F."/>
        </authorList>
    </citation>
    <scope>FUNCTION</scope>
</reference>
<reference key="3">
    <citation type="journal article" date="2017" name="Org. Biomol. Chem.">
        <title>A bifunctional old yellow enzyme from Penicillium roqueforti is involved in ergot alkaloid biosynthesis.</title>
        <authorList>
            <person name="Gerhards N."/>
            <person name="Li S.M."/>
        </authorList>
    </citation>
    <scope>FUNCTION</scope>
    <scope>SUBUNIT</scope>
    <scope>CATALYTIC ACTIVITY</scope>
    <scope>COFACTOR</scope>
    <scope>ACTIVE SITE</scope>
    <scope>MUTAGENESIS OF TYR-174</scope>
    <scope>PATHWAY</scope>
</reference>
<protein>
    <recommendedName>
        <fullName evidence="5">Chanoclavine-I aldehyde reductase fgaOx3</fullName>
        <ecNumber evidence="4">1.3.1.100</ecNumber>
    </recommendedName>
    <alternativeName>
        <fullName evidence="5">Isofumigaclavine biosynthesis protein fgaOx3</fullName>
    </alternativeName>
    <alternativeName>
        <fullName evidence="5">Old yellow enzyme homolog fgaOx3</fullName>
        <shortName evidence="5">OYE fgaOx3</shortName>
    </alternativeName>
</protein>
<proteinExistence type="evidence at protein level"/>
<evidence type="ECO:0000250" key="1">
    <source>
        <dbReference type="UniProtKB" id="Q02899"/>
    </source>
</evidence>
<evidence type="ECO:0000250" key="2">
    <source>
        <dbReference type="UniProtKB" id="Q4WZ70"/>
    </source>
</evidence>
<evidence type="ECO:0000269" key="3">
    <source>
    </source>
</evidence>
<evidence type="ECO:0000269" key="4">
    <source>
    </source>
</evidence>
<evidence type="ECO:0000303" key="5">
    <source>
    </source>
</evidence>
<evidence type="ECO:0000305" key="6"/>
<feature type="chain" id="PRO_0000444542" description="Chanoclavine-I aldehyde reductase fgaOx3">
    <location>
        <begin position="1"/>
        <end position="369"/>
    </location>
</feature>
<feature type="active site" description="Proton donor" evidence="4">
    <location>
        <position position="174"/>
    </location>
</feature>
<feature type="binding site" evidence="2">
    <location>
        <begin position="23"/>
        <end position="25"/>
    </location>
    <ligand>
        <name>FMN</name>
        <dbReference type="ChEBI" id="CHEBI:58210"/>
    </ligand>
</feature>
<feature type="binding site" evidence="2">
    <location>
        <position position="58"/>
    </location>
    <ligand>
        <name>FMN</name>
        <dbReference type="ChEBI" id="CHEBI:58210"/>
    </ligand>
</feature>
<feature type="binding site" evidence="2">
    <location>
        <position position="100"/>
    </location>
    <ligand>
        <name>FMN</name>
        <dbReference type="ChEBI" id="CHEBI:58210"/>
    </ligand>
</feature>
<feature type="binding site" evidence="2">
    <location>
        <position position="169"/>
    </location>
    <ligand>
        <name>FMN</name>
        <dbReference type="ChEBI" id="CHEBI:58210"/>
    </ligand>
</feature>
<feature type="binding site" evidence="1">
    <location>
        <position position="169"/>
    </location>
    <ligand>
        <name>substrate</name>
    </ligand>
</feature>
<feature type="binding site" evidence="1">
    <location>
        <position position="172"/>
    </location>
    <ligand>
        <name>substrate</name>
    </ligand>
</feature>
<feature type="binding site" evidence="2">
    <location>
        <position position="292"/>
    </location>
    <ligand>
        <name>FMN</name>
        <dbReference type="ChEBI" id="CHEBI:58210"/>
    </ligand>
</feature>
<feature type="binding site" evidence="2">
    <location>
        <begin position="316"/>
        <end position="317"/>
    </location>
    <ligand>
        <name>FMN</name>
        <dbReference type="ChEBI" id="CHEBI:58210"/>
    </ligand>
</feature>
<feature type="binding site" evidence="1">
    <location>
        <position position="317"/>
    </location>
    <ligand>
        <name>FMN</name>
        <dbReference type="ChEBI" id="CHEBI:58210"/>
    </ligand>
</feature>
<feature type="binding site" evidence="1">
    <location>
        <position position="344"/>
    </location>
    <ligand>
        <name>substrate</name>
    </ligand>
</feature>
<feature type="mutagenesis site" description="Impairs the catalytic activity and formation of festuclavine in vitro." evidence="4">
    <original>Y</original>
    <variation>F</variation>
    <location>
        <position position="174"/>
    </location>
</feature>
<accession>W6Q9S9</accession>
<keyword id="KW-0017">Alkaloid metabolism</keyword>
<keyword id="KW-0285">Flavoprotein</keyword>
<keyword id="KW-0288">FMN</keyword>
<keyword id="KW-0521">NADP</keyword>
<keyword id="KW-0560">Oxidoreductase</keyword>
<keyword id="KW-1185">Reference proteome</keyword>
<comment type="function">
    <text evidence="3 4">Chanoclavine-I aldehyde reductase; part of the gene cluster that mediates the biosynthesis of isofumigaclavines, fungal ergot alkaloids (PubMed:28902217). The tryptophan dimethylallyltransferase ifgA catalyzes the first step of ergot alkaloid biosynthesis by condensing dimethylallyl diphosphate (DMAP) and tryptophan to form 4-dimethylallyl-L-tryptophan (PubMed:28620689). The second step is catalyzed by the methyltransferase ifgB that methylates 4-dimethylallyl-L-tryptophan in the presence of S-adenosyl-L-methionine, resulting in the formation of N-methyl-dimethylallyl-L-tryptophan (PubMed:28620689). The catalase ifgD and the FAD-dependent oxidoreductase ifgC then transform N-methyl-dimethylallyl-L-tryptophan to chanoclavine-I which is further oxidized by ifgE in the presence of NAD(+), resulting in the formation of chanoclavine-I aldehyde (PubMed:28902217). The chanoclavine-I aldehyde reductases ifgG and/or fgaOx3 reduce chanoclavine-I aldehyde to dihydrochanoclavine-I aldehyde that spontaneously dehydrates to form 6,8-dimethyl-6,7-didehydroergoline (PubMed:28620689, PubMed:28902217). The festuclavine dehydrogenases ifgF1 and/or ifgF2 then catalyze the reduction of 6,8-dimethyl-6,7-didehydroergoline to form festuclavine (PubMed:28620689). Hydrolysis of festuclavine by a yet undetermined cytochrome P450 monooxygenase (called ifgH) then leads to the formation of isofumigaclavine B which is in turn acetylated by ifgI to isofumigaclavine A (PubMed:28620689). Penicillium roqueforti has interestingly at least two sets of genes for the consumption of chanoclavine-I aldehyde on three different loci, the OYEs ifgG/fgaOx3 and the festuclavine synthase homologs ifgF1/ifgF2 (PubMed:28620689, PubMed:28902217). The reason for the duplication of these genes is unclear, probably to ensure the conversion of chanoclavine-I aldehyde by differential gene expression under various environmental conditions (PubMed:28902217).</text>
</comment>
<comment type="catalytic activity">
    <reaction evidence="4">
        <text>dihydrochanoclavine-I aldehyde + NADP(+) = chanoclavine-I aldehyde + NADPH + H(+)</text>
        <dbReference type="Rhea" id="RHEA:35947"/>
        <dbReference type="ChEBI" id="CHEBI:15378"/>
        <dbReference type="ChEBI" id="CHEBI:57783"/>
        <dbReference type="ChEBI" id="CHEBI:58349"/>
        <dbReference type="ChEBI" id="CHEBI:65032"/>
        <dbReference type="ChEBI" id="CHEBI:71487"/>
        <dbReference type="EC" id="1.3.1.100"/>
    </reaction>
</comment>
<comment type="cofactor">
    <cofactor evidence="4">
        <name>FMN</name>
        <dbReference type="ChEBI" id="CHEBI:58210"/>
    </cofactor>
</comment>
<comment type="pathway">
    <text evidence="4">Alkaloid biosynthesis; ergot alkaloid biosynthesis.</text>
</comment>
<comment type="subunit">
    <text evidence="4">Monomer (PubMed:28902217).</text>
</comment>
<comment type="similarity">
    <text evidence="6">Belongs to the NADH:flavin oxidoreductase/NADH oxidase family.</text>
</comment>